<name>RL21_PYRIL</name>
<comment type="similarity">
    <text evidence="1">Belongs to the eukaryotic ribosomal protein eL21 family.</text>
</comment>
<protein>
    <recommendedName>
        <fullName evidence="1">Large ribosomal subunit protein eL21</fullName>
    </recommendedName>
    <alternativeName>
        <fullName evidence="3">50S ribosomal protein L21e</fullName>
    </alternativeName>
</protein>
<dbReference type="EMBL" id="CP000504">
    <property type="protein sequence ID" value="ABL87756.1"/>
    <property type="molecule type" value="Genomic_DNA"/>
</dbReference>
<dbReference type="RefSeq" id="WP_011762332.1">
    <property type="nucleotide sequence ID" value="NC_008701.1"/>
</dbReference>
<dbReference type="SMR" id="A1RS24"/>
<dbReference type="STRING" id="384616.Pisl_0578"/>
<dbReference type="GeneID" id="4616331"/>
<dbReference type="KEGG" id="pis:Pisl_0578"/>
<dbReference type="eggNOG" id="arCOG04129">
    <property type="taxonomic scope" value="Archaea"/>
</dbReference>
<dbReference type="HOGENOM" id="CLU_103610_1_1_2"/>
<dbReference type="OrthoDB" id="6295at2157"/>
<dbReference type="Proteomes" id="UP000002595">
    <property type="component" value="Chromosome"/>
</dbReference>
<dbReference type="GO" id="GO:1990904">
    <property type="term" value="C:ribonucleoprotein complex"/>
    <property type="evidence" value="ECO:0007669"/>
    <property type="project" value="UniProtKB-KW"/>
</dbReference>
<dbReference type="GO" id="GO:0005840">
    <property type="term" value="C:ribosome"/>
    <property type="evidence" value="ECO:0007669"/>
    <property type="project" value="UniProtKB-KW"/>
</dbReference>
<dbReference type="GO" id="GO:0003735">
    <property type="term" value="F:structural constituent of ribosome"/>
    <property type="evidence" value="ECO:0007669"/>
    <property type="project" value="InterPro"/>
</dbReference>
<dbReference type="GO" id="GO:0006412">
    <property type="term" value="P:translation"/>
    <property type="evidence" value="ECO:0007669"/>
    <property type="project" value="UniProtKB-UniRule"/>
</dbReference>
<dbReference type="FunFam" id="2.30.30.70:FF:000001">
    <property type="entry name" value="60S ribosomal protein L21"/>
    <property type="match status" value="1"/>
</dbReference>
<dbReference type="Gene3D" id="2.30.30.70">
    <property type="entry name" value="Ribosomal protein L21"/>
    <property type="match status" value="1"/>
</dbReference>
<dbReference type="HAMAP" id="MF_00369">
    <property type="entry name" value="Ribosomal_eL21"/>
    <property type="match status" value="1"/>
</dbReference>
<dbReference type="InterPro" id="IPR001147">
    <property type="entry name" value="Ribosomal_eL21"/>
</dbReference>
<dbReference type="InterPro" id="IPR022856">
    <property type="entry name" value="Ribosomal_eL21_arc"/>
</dbReference>
<dbReference type="InterPro" id="IPR036948">
    <property type="entry name" value="Ribosomal_eL21_sf"/>
</dbReference>
<dbReference type="InterPro" id="IPR008991">
    <property type="entry name" value="Translation_prot_SH3-like_sf"/>
</dbReference>
<dbReference type="NCBIfam" id="NF003303">
    <property type="entry name" value="PRK04306.1"/>
    <property type="match status" value="1"/>
</dbReference>
<dbReference type="PANTHER" id="PTHR20981">
    <property type="entry name" value="60S RIBOSOMAL PROTEIN L21"/>
    <property type="match status" value="1"/>
</dbReference>
<dbReference type="Pfam" id="PF01157">
    <property type="entry name" value="Ribosomal_L21e"/>
    <property type="match status" value="1"/>
</dbReference>
<dbReference type="SUPFAM" id="SSF50104">
    <property type="entry name" value="Translation proteins SH3-like domain"/>
    <property type="match status" value="1"/>
</dbReference>
<accession>A1RS24</accession>
<reference key="1">
    <citation type="submission" date="2006-12" db="EMBL/GenBank/DDBJ databases">
        <title>Complete sequence of Pyrobaculum islandicum DSM 4184.</title>
        <authorList>
            <person name="Copeland A."/>
            <person name="Lucas S."/>
            <person name="Lapidus A."/>
            <person name="Barry K."/>
            <person name="Detter J.C."/>
            <person name="Glavina del Rio T."/>
            <person name="Dalin E."/>
            <person name="Tice H."/>
            <person name="Pitluck S."/>
            <person name="Meincke L."/>
            <person name="Brettin T."/>
            <person name="Bruce D."/>
            <person name="Han C."/>
            <person name="Tapia R."/>
            <person name="Gilna P."/>
            <person name="Schmutz J."/>
            <person name="Larimer F."/>
            <person name="Land M."/>
            <person name="Hauser L."/>
            <person name="Kyrpides N."/>
            <person name="Mikhailova N."/>
            <person name="Cozen A.E."/>
            <person name="Fitz-Gibbon S.T."/>
            <person name="House C.H."/>
            <person name="Saltikov C."/>
            <person name="Lowe T."/>
            <person name="Richardson P."/>
        </authorList>
    </citation>
    <scope>NUCLEOTIDE SEQUENCE [LARGE SCALE GENOMIC DNA]</scope>
    <source>
        <strain>DSM 4184 / JCM 9189 / GEO3</strain>
    </source>
</reference>
<feature type="chain" id="PRO_1000007129" description="Large ribosomal subunit protein eL21">
    <location>
        <begin position="1"/>
        <end position="100"/>
    </location>
</feature>
<feature type="region of interest" description="Disordered" evidence="2">
    <location>
        <begin position="1"/>
        <end position="21"/>
    </location>
</feature>
<sequence length="100" mass="11529">MVKRTHGYRYKSRKLLRKKPRERGLSGLSRLLYEYKPGDRVVIDIDPTFVENAPHRRYQGKVGVVIGTRGRAYVIETYLGDKKKILVVTPEHLKPHQGGS</sequence>
<organism>
    <name type="scientific">Pyrobaculum islandicum (strain DSM 4184 / JCM 9189 / GEO3)</name>
    <dbReference type="NCBI Taxonomy" id="384616"/>
    <lineage>
        <taxon>Archaea</taxon>
        <taxon>Thermoproteota</taxon>
        <taxon>Thermoprotei</taxon>
        <taxon>Thermoproteales</taxon>
        <taxon>Thermoproteaceae</taxon>
        <taxon>Pyrobaculum</taxon>
    </lineage>
</organism>
<keyword id="KW-0687">Ribonucleoprotein</keyword>
<keyword id="KW-0689">Ribosomal protein</keyword>
<proteinExistence type="inferred from homology"/>
<evidence type="ECO:0000255" key="1">
    <source>
        <dbReference type="HAMAP-Rule" id="MF_00369"/>
    </source>
</evidence>
<evidence type="ECO:0000256" key="2">
    <source>
        <dbReference type="SAM" id="MobiDB-lite"/>
    </source>
</evidence>
<evidence type="ECO:0000305" key="3"/>
<gene>
    <name evidence="1" type="primary">rpl21e</name>
    <name type="ordered locus">Pisl_0578</name>
</gene>